<organism>
    <name type="scientific">Leptospira interrogans serogroup Icterohaemorrhagiae serovar copenhageni (strain Fiocruz L1-130)</name>
    <dbReference type="NCBI Taxonomy" id="267671"/>
    <lineage>
        <taxon>Bacteria</taxon>
        <taxon>Pseudomonadati</taxon>
        <taxon>Spirochaetota</taxon>
        <taxon>Spirochaetia</taxon>
        <taxon>Leptospirales</taxon>
        <taxon>Leptospiraceae</taxon>
        <taxon>Leptospira</taxon>
    </lineage>
</organism>
<keyword id="KW-0694">RNA-binding</keyword>
<keyword id="KW-0346">Stress response</keyword>
<accession>Q72Q67</accession>
<dbReference type="EMBL" id="AE016823">
    <property type="protein sequence ID" value="AAS70817.1"/>
    <property type="molecule type" value="Genomic_DNA"/>
</dbReference>
<dbReference type="RefSeq" id="WP_001274793.1">
    <property type="nucleotide sequence ID" value="NC_005823.1"/>
</dbReference>
<dbReference type="SMR" id="Q72Q67"/>
<dbReference type="GeneID" id="61142131"/>
<dbReference type="KEGG" id="lic:LIC_12245"/>
<dbReference type="HOGENOM" id="CLU_113688_0_2_12"/>
<dbReference type="Proteomes" id="UP000007037">
    <property type="component" value="Chromosome I"/>
</dbReference>
<dbReference type="GO" id="GO:0005829">
    <property type="term" value="C:cytosol"/>
    <property type="evidence" value="ECO:0007669"/>
    <property type="project" value="TreeGrafter"/>
</dbReference>
<dbReference type="GO" id="GO:0003723">
    <property type="term" value="F:RNA binding"/>
    <property type="evidence" value="ECO:0007669"/>
    <property type="project" value="UniProtKB-UniRule"/>
</dbReference>
<dbReference type="GO" id="GO:0006355">
    <property type="term" value="P:regulation of DNA-templated transcription"/>
    <property type="evidence" value="ECO:0007669"/>
    <property type="project" value="InterPro"/>
</dbReference>
<dbReference type="GO" id="GO:0043487">
    <property type="term" value="P:regulation of RNA stability"/>
    <property type="evidence" value="ECO:0007669"/>
    <property type="project" value="TreeGrafter"/>
</dbReference>
<dbReference type="GO" id="GO:0045974">
    <property type="term" value="P:regulation of translation, ncRNA-mediated"/>
    <property type="evidence" value="ECO:0007669"/>
    <property type="project" value="TreeGrafter"/>
</dbReference>
<dbReference type="CDD" id="cd01716">
    <property type="entry name" value="Hfq"/>
    <property type="match status" value="1"/>
</dbReference>
<dbReference type="FunFam" id="2.30.30.100:FF:000046">
    <property type="entry name" value="RNA-binding protein Hfq"/>
    <property type="match status" value="1"/>
</dbReference>
<dbReference type="Gene3D" id="2.30.30.100">
    <property type="match status" value="1"/>
</dbReference>
<dbReference type="HAMAP" id="MF_00436">
    <property type="entry name" value="Hfq"/>
    <property type="match status" value="1"/>
</dbReference>
<dbReference type="InterPro" id="IPR005001">
    <property type="entry name" value="Hfq"/>
</dbReference>
<dbReference type="InterPro" id="IPR010920">
    <property type="entry name" value="LSM_dom_sf"/>
</dbReference>
<dbReference type="InterPro" id="IPR047575">
    <property type="entry name" value="Sm"/>
</dbReference>
<dbReference type="NCBIfam" id="TIGR02383">
    <property type="entry name" value="Hfq"/>
    <property type="match status" value="1"/>
</dbReference>
<dbReference type="NCBIfam" id="NF001602">
    <property type="entry name" value="PRK00395.1"/>
    <property type="match status" value="1"/>
</dbReference>
<dbReference type="PANTHER" id="PTHR34772">
    <property type="entry name" value="RNA-BINDING PROTEIN HFQ"/>
    <property type="match status" value="1"/>
</dbReference>
<dbReference type="PANTHER" id="PTHR34772:SF1">
    <property type="entry name" value="RNA-BINDING PROTEIN HFQ"/>
    <property type="match status" value="1"/>
</dbReference>
<dbReference type="Pfam" id="PF17209">
    <property type="entry name" value="Hfq"/>
    <property type="match status" value="1"/>
</dbReference>
<dbReference type="SUPFAM" id="SSF50182">
    <property type="entry name" value="Sm-like ribonucleoproteins"/>
    <property type="match status" value="1"/>
</dbReference>
<dbReference type="PROSITE" id="PS52002">
    <property type="entry name" value="SM"/>
    <property type="match status" value="1"/>
</dbReference>
<feature type="chain" id="PRO_0000095647" description="RNA-binding protein Hfq">
    <location>
        <begin position="1"/>
        <end position="85"/>
    </location>
</feature>
<feature type="domain" description="Sm" evidence="2">
    <location>
        <begin position="9"/>
        <end position="69"/>
    </location>
</feature>
<name>HFQ_LEPIC</name>
<evidence type="ECO:0000255" key="1">
    <source>
        <dbReference type="HAMAP-Rule" id="MF_00436"/>
    </source>
</evidence>
<evidence type="ECO:0000255" key="2">
    <source>
        <dbReference type="PROSITE-ProRule" id="PRU01346"/>
    </source>
</evidence>
<comment type="function">
    <text evidence="1">RNA chaperone that binds small regulatory RNA (sRNAs) and mRNAs to facilitate mRNA translational regulation in response to envelope stress, environmental stress and changes in metabolite concentrations. Also binds with high specificity to tRNAs.</text>
</comment>
<comment type="subunit">
    <text evidence="1">Homohexamer.</text>
</comment>
<comment type="similarity">
    <text evidence="1">Belongs to the Hfq family.</text>
</comment>
<proteinExistence type="inferred from homology"/>
<protein>
    <recommendedName>
        <fullName evidence="1">RNA-binding protein Hfq</fullName>
    </recommendedName>
</protein>
<reference key="1">
    <citation type="journal article" date="2004" name="J. Bacteriol.">
        <title>Comparative genomics of two Leptospira interrogans serovars reveals novel insights into physiology and pathogenesis.</title>
        <authorList>
            <person name="Nascimento A.L.T.O."/>
            <person name="Ko A.I."/>
            <person name="Martins E.A.L."/>
            <person name="Monteiro-Vitorello C.B."/>
            <person name="Ho P.L."/>
            <person name="Haake D.A."/>
            <person name="Verjovski-Almeida S."/>
            <person name="Hartskeerl R.A."/>
            <person name="Marques M.V."/>
            <person name="Oliveira M.C."/>
            <person name="Menck C.F.M."/>
            <person name="Leite L.C.C."/>
            <person name="Carrer H."/>
            <person name="Coutinho L.L."/>
            <person name="Degrave W.M."/>
            <person name="Dellagostin O.A."/>
            <person name="El-Dorry H."/>
            <person name="Ferro E.S."/>
            <person name="Ferro M.I.T."/>
            <person name="Furlan L.R."/>
            <person name="Gamberini M."/>
            <person name="Giglioti E.A."/>
            <person name="Goes-Neto A."/>
            <person name="Goldman G.H."/>
            <person name="Goldman M.H.S."/>
            <person name="Harakava R."/>
            <person name="Jeronimo S.M.B."/>
            <person name="Junqueira-de-Azevedo I.L.M."/>
            <person name="Kimura E.T."/>
            <person name="Kuramae E.E."/>
            <person name="Lemos E.G.M."/>
            <person name="Lemos M.V.F."/>
            <person name="Marino C.L."/>
            <person name="Nunes L.R."/>
            <person name="de Oliveira R.C."/>
            <person name="Pereira G.G."/>
            <person name="Reis M.S."/>
            <person name="Schriefer A."/>
            <person name="Siqueira W.J."/>
            <person name="Sommer P."/>
            <person name="Tsai S.M."/>
            <person name="Simpson A.J.G."/>
            <person name="Ferro J.A."/>
            <person name="Camargo L.E.A."/>
            <person name="Kitajima J.P."/>
            <person name="Setubal J.C."/>
            <person name="Van Sluys M.A."/>
        </authorList>
    </citation>
    <scope>NUCLEOTIDE SEQUENCE [LARGE SCALE GENOMIC DNA]</scope>
    <source>
        <strain>Fiocruz L1-130</strain>
    </source>
</reference>
<sequence length="85" mass="9532">MSAKNNIQDQLLNTARKDKLDLTIYLLNGVPLKGKVVSFDNFTIVLEQENKQSLVYKHAISTIIPAKIIKLYTEEAKDNKDAAQG</sequence>
<gene>
    <name evidence="1" type="primary">hfq</name>
    <name type="ordered locus">LIC_12245</name>
</gene>